<protein>
    <recommendedName>
        <fullName evidence="1">Homoserine O-succinyltransferase</fullName>
        <shortName evidence="1 3">HST</shortName>
        <ecNumber evidence="1 2">2.3.1.46</ecNumber>
    </recommendedName>
    <alternativeName>
        <fullName evidence="1">Homoserine transsuccinylase</fullName>
        <shortName evidence="1">HTS</shortName>
    </alternativeName>
</protein>
<organism>
    <name type="scientific">Thiothrix nivea (strain ATCC 35100 / DSM 5205 / JP2)</name>
    <dbReference type="NCBI Taxonomy" id="870187"/>
    <lineage>
        <taxon>Bacteria</taxon>
        <taxon>Pseudomonadati</taxon>
        <taxon>Pseudomonadota</taxon>
        <taxon>Gammaproteobacteria</taxon>
        <taxon>Thiotrichales</taxon>
        <taxon>Thiotrichaceae</taxon>
        <taxon>Thiothrix</taxon>
    </lineage>
</organism>
<name>METAS_THINJ</name>
<comment type="function">
    <text evidence="2">Transfers a succinyl group from succinyl-CoA to L-homoserine, forming succinyl-L-homoserine. In vitro, can also use glutaryl-CoA as acyl donor.</text>
</comment>
<comment type="catalytic activity">
    <reaction evidence="1 2">
        <text>L-homoserine + succinyl-CoA = O-succinyl-L-homoserine + CoA</text>
        <dbReference type="Rhea" id="RHEA:22008"/>
        <dbReference type="ChEBI" id="CHEBI:57287"/>
        <dbReference type="ChEBI" id="CHEBI:57292"/>
        <dbReference type="ChEBI" id="CHEBI:57476"/>
        <dbReference type="ChEBI" id="CHEBI:57661"/>
        <dbReference type="EC" id="2.3.1.46"/>
    </reaction>
</comment>
<comment type="pathway">
    <text evidence="1">Amino-acid biosynthesis; L-methionine biosynthesis via de novo pathway; O-succinyl-L-homoserine from L-homoserine: step 1/1.</text>
</comment>
<comment type="subcellular location">
    <subcellularLocation>
        <location evidence="1">Cytoplasm</location>
    </subcellularLocation>
</comment>
<comment type="similarity">
    <text evidence="1">Belongs to the MetA family.</text>
</comment>
<proteinExistence type="evidence at protein level"/>
<sequence>MPLVAHTRLPTFERLKQEGQTVLSEDYAFQQDIRELHIGFLNMMPDAALAATERQFLRLVNESNLIAQFHIHPFTLGTLPRGDKAQAHIAQYYDKFEDLQEQGLDALIITGANPAAPHLEDEPFWDGLCEVVAWAQENVTSTLCSCLASHALVQHLWGIRRRPLGFKRWGVYSHAVTMPEHPLVNDLNTRFDVPHSRFNQIDREPLEAVGVQVLVESTEAGVHMAVSPDLFRMVFMQGHPEYDTVSLLKEYRREVTRWFDGTRADYPPFPQNYLRPKAKAILNEYRLEQEKAKRLGKPLPDFPEKLLLPMLHNTWCDTAKVFYSNWIGKVYQLTNNDRRKPFMEGVNPDDPLGLRQQLGI</sequence>
<gene>
    <name evidence="1 3" type="primary">metAS</name>
    <name evidence="4" type="ORF">Thini_0115</name>
</gene>
<dbReference type="EC" id="2.3.1.46" evidence="1 2"/>
<dbReference type="EMBL" id="JH651384">
    <property type="protein sequence ID" value="EIJ32782.1"/>
    <property type="molecule type" value="Genomic_DNA"/>
</dbReference>
<dbReference type="RefSeq" id="WP_002706699.1">
    <property type="nucleotide sequence ID" value="NZ_JH651384.1"/>
</dbReference>
<dbReference type="SMR" id="I3BN39"/>
<dbReference type="eggNOG" id="COG1897">
    <property type="taxonomic scope" value="Bacteria"/>
</dbReference>
<dbReference type="HOGENOM" id="CLU_057851_0_1_6"/>
<dbReference type="OrthoDB" id="9772423at2"/>
<dbReference type="UniPathway" id="UPA00051">
    <property type="reaction ID" value="UER00075"/>
</dbReference>
<dbReference type="Proteomes" id="UP000005317">
    <property type="component" value="Unassembled WGS sequence"/>
</dbReference>
<dbReference type="GO" id="GO:0005737">
    <property type="term" value="C:cytoplasm"/>
    <property type="evidence" value="ECO:0007669"/>
    <property type="project" value="UniProtKB-SubCell"/>
</dbReference>
<dbReference type="GO" id="GO:0004414">
    <property type="term" value="F:homoserine O-acetyltransferase activity"/>
    <property type="evidence" value="ECO:0007669"/>
    <property type="project" value="UniProtKB-UniRule"/>
</dbReference>
<dbReference type="GO" id="GO:0008899">
    <property type="term" value="F:homoserine O-succinyltransferase activity"/>
    <property type="evidence" value="ECO:0007669"/>
    <property type="project" value="UniProtKB-EC"/>
</dbReference>
<dbReference type="GO" id="GO:0009086">
    <property type="term" value="P:methionine biosynthetic process"/>
    <property type="evidence" value="ECO:0007669"/>
    <property type="project" value="UniProtKB-UniRule"/>
</dbReference>
<dbReference type="CDD" id="cd03131">
    <property type="entry name" value="GATase1_HTS"/>
    <property type="match status" value="1"/>
</dbReference>
<dbReference type="Gene3D" id="3.40.50.880">
    <property type="match status" value="1"/>
</dbReference>
<dbReference type="HAMAP" id="MF_00295">
    <property type="entry name" value="MetA_acyltransf"/>
    <property type="match status" value="1"/>
</dbReference>
<dbReference type="InterPro" id="IPR029062">
    <property type="entry name" value="Class_I_gatase-like"/>
</dbReference>
<dbReference type="InterPro" id="IPR033752">
    <property type="entry name" value="MetA_family"/>
</dbReference>
<dbReference type="NCBIfam" id="NF003776">
    <property type="entry name" value="PRK05368.1-3"/>
    <property type="match status" value="1"/>
</dbReference>
<dbReference type="PANTHER" id="PTHR20919">
    <property type="entry name" value="HOMOSERINE O-SUCCINYLTRANSFERASE"/>
    <property type="match status" value="1"/>
</dbReference>
<dbReference type="PANTHER" id="PTHR20919:SF0">
    <property type="entry name" value="HOMOSERINE O-SUCCINYLTRANSFERASE"/>
    <property type="match status" value="1"/>
</dbReference>
<dbReference type="Pfam" id="PF04204">
    <property type="entry name" value="HTS"/>
    <property type="match status" value="1"/>
</dbReference>
<dbReference type="SUPFAM" id="SSF52317">
    <property type="entry name" value="Class I glutamine amidotransferase-like"/>
    <property type="match status" value="1"/>
</dbReference>
<feature type="chain" id="PRO_0000440361" description="Homoserine O-succinyltransferase">
    <location>
        <begin position="1"/>
        <end position="360"/>
    </location>
</feature>
<feature type="active site" description="Acyl-thioester intermediate" evidence="1">
    <location>
        <position position="146"/>
    </location>
</feature>
<feature type="active site" description="Proton acceptor" evidence="1">
    <location>
        <position position="239"/>
    </location>
</feature>
<feature type="active site" evidence="1">
    <location>
        <position position="241"/>
    </location>
</feature>
<feature type="binding site" evidence="1">
    <location>
        <position position="167"/>
    </location>
    <ligand>
        <name>substrate</name>
    </ligand>
</feature>
<feature type="binding site" evidence="1">
    <location>
        <position position="196"/>
    </location>
    <ligand>
        <name>substrate</name>
    </ligand>
</feature>
<feature type="binding site" evidence="1">
    <location>
        <position position="253"/>
    </location>
    <ligand>
        <name>substrate</name>
    </ligand>
</feature>
<feature type="site" description="Important for acyl-CoA specificity" evidence="1">
    <location>
        <position position="113"/>
    </location>
</feature>
<feature type="site" description="Important for acyl-CoA specificity" evidence="1">
    <location>
        <position position="115"/>
    </location>
</feature>
<feature type="site" description="Important for acyl-CoA specificity" evidence="1">
    <location>
        <position position="147"/>
    </location>
</feature>
<feature type="site" description="Important for substrate specificity" evidence="1">
    <location>
        <position position="196"/>
    </location>
</feature>
<accession>I3BN39</accession>
<evidence type="ECO:0000255" key="1">
    <source>
        <dbReference type="HAMAP-Rule" id="MF_00295"/>
    </source>
</evidence>
<evidence type="ECO:0000269" key="2">
    <source>
    </source>
</evidence>
<evidence type="ECO:0000303" key="3">
    <source>
    </source>
</evidence>
<evidence type="ECO:0000312" key="4">
    <source>
        <dbReference type="EMBL" id="EIJ32782.1"/>
    </source>
</evidence>
<reference key="1">
    <citation type="journal article" date="2011" name="Stand. Genomic Sci.">
        <title>Genome sequence of the filamentous, gliding Thiothrix nivea neotype strain (JP2(T)).</title>
        <authorList>
            <person name="Lapidus A."/>
            <person name="Nolan M."/>
            <person name="Lucas S."/>
            <person name="Glavina Del Rio T."/>
            <person name="Tice H."/>
            <person name="Cheng J.F."/>
            <person name="Tapia R."/>
            <person name="Han C."/>
            <person name="Goodwin L."/>
            <person name="Pitluck S."/>
            <person name="Liolios K."/>
            <person name="Pagani I."/>
            <person name="Ivanova N."/>
            <person name="Huntemann M."/>
            <person name="Mavromatis K."/>
            <person name="Mikhailova N."/>
            <person name="Pati A."/>
            <person name="Chen A."/>
            <person name="Palaniappan K."/>
            <person name="Land M."/>
            <person name="Brambilla E.M."/>
            <person name="Rohde M."/>
            <person name="Abt B."/>
            <person name="Verbarg S."/>
            <person name="Goker M."/>
            <person name="Bristow J."/>
            <person name="Eisen J.A."/>
            <person name="Markowitz V."/>
            <person name="Hugenholtz P."/>
            <person name="Kyrpides N.C."/>
            <person name="Klenk H.P."/>
            <person name="Woyke T."/>
        </authorList>
    </citation>
    <scope>NUCLEOTIDE SEQUENCE [LARGE SCALE GENOMIC DNA]</scope>
    <source>
        <strain>ATCC 35100 / DSM 5205 / JP2</strain>
    </source>
</reference>
<reference key="2">
    <citation type="journal article" date="2017" name="Nat. Chem. Biol.">
        <title>Parallel evolution of non-homologous isofunctional enzymes in methionine biosynthesis.</title>
        <authorList>
            <person name="Bastard K."/>
            <person name="Perret A."/>
            <person name="Mariage A."/>
            <person name="Bessonnet T."/>
            <person name="Pinet-Turpault A."/>
            <person name="Petit J.L."/>
            <person name="Darii E."/>
            <person name="Bazire P."/>
            <person name="Vergne-Vaxelaire C."/>
            <person name="Brewee C."/>
            <person name="Debard A."/>
            <person name="Pellouin V."/>
            <person name="Besnard-Gonnet M."/>
            <person name="Artiguenave F."/>
            <person name="Medigue C."/>
            <person name="Vallenet D."/>
            <person name="Danchin A."/>
            <person name="Zaparucha A."/>
            <person name="Weissenbach J."/>
            <person name="Salanoubat M."/>
            <person name="de Berardinis V."/>
        </authorList>
    </citation>
    <scope>FUNCTION</scope>
    <scope>CATALYTIC ACTIVITY</scope>
</reference>
<keyword id="KW-0012">Acyltransferase</keyword>
<keyword id="KW-0028">Amino-acid biosynthesis</keyword>
<keyword id="KW-0963">Cytoplasm</keyword>
<keyword id="KW-0486">Methionine biosynthesis</keyword>
<keyword id="KW-1185">Reference proteome</keyword>
<keyword id="KW-0808">Transferase</keyword>